<name>NEK4_ARATH</name>
<protein>
    <recommendedName>
        <fullName>Serine/threonine-protein kinase Nek4</fullName>
        <ecNumber>2.7.11.1</ecNumber>
    </recommendedName>
    <alternativeName>
        <fullName>NimA-related protein kinase 4</fullName>
        <shortName>AtNek4</shortName>
    </alternativeName>
</protein>
<comment type="function">
    <text>May be involved in plant development processes.</text>
</comment>
<comment type="catalytic activity">
    <reaction>
        <text>L-seryl-[protein] + ATP = O-phospho-L-seryl-[protein] + ADP + H(+)</text>
        <dbReference type="Rhea" id="RHEA:17989"/>
        <dbReference type="Rhea" id="RHEA-COMP:9863"/>
        <dbReference type="Rhea" id="RHEA-COMP:11604"/>
        <dbReference type="ChEBI" id="CHEBI:15378"/>
        <dbReference type="ChEBI" id="CHEBI:29999"/>
        <dbReference type="ChEBI" id="CHEBI:30616"/>
        <dbReference type="ChEBI" id="CHEBI:83421"/>
        <dbReference type="ChEBI" id="CHEBI:456216"/>
        <dbReference type="EC" id="2.7.11.1"/>
    </reaction>
</comment>
<comment type="catalytic activity">
    <reaction>
        <text>L-threonyl-[protein] + ATP = O-phospho-L-threonyl-[protein] + ADP + H(+)</text>
        <dbReference type="Rhea" id="RHEA:46608"/>
        <dbReference type="Rhea" id="RHEA-COMP:11060"/>
        <dbReference type="Rhea" id="RHEA-COMP:11605"/>
        <dbReference type="ChEBI" id="CHEBI:15378"/>
        <dbReference type="ChEBI" id="CHEBI:30013"/>
        <dbReference type="ChEBI" id="CHEBI:30616"/>
        <dbReference type="ChEBI" id="CHEBI:61977"/>
        <dbReference type="ChEBI" id="CHEBI:456216"/>
        <dbReference type="EC" id="2.7.11.1"/>
    </reaction>
</comment>
<comment type="similarity">
    <text evidence="4">Belongs to the protein kinase superfamily. NEK Ser/Thr protein kinase family. NIMA subfamily.</text>
</comment>
<comment type="sequence caution" evidence="4">
    <conflict type="erroneous gene model prediction">
        <sequence resource="EMBL-CDS" id="CAB86429"/>
    </conflict>
</comment>
<feature type="chain" id="PRO_0000314040" description="Serine/threonine-protein kinase Nek4">
    <location>
        <begin position="1"/>
        <end position="555"/>
    </location>
</feature>
<feature type="domain" description="Protein kinase" evidence="1">
    <location>
        <begin position="4"/>
        <end position="258"/>
    </location>
</feature>
<feature type="region of interest" description="Disordered" evidence="3">
    <location>
        <begin position="288"/>
        <end position="328"/>
    </location>
</feature>
<feature type="region of interest" description="Disordered" evidence="3">
    <location>
        <begin position="346"/>
        <end position="372"/>
    </location>
</feature>
<feature type="region of interest" description="Disordered" evidence="3">
    <location>
        <begin position="443"/>
        <end position="477"/>
    </location>
</feature>
<feature type="compositionally biased region" description="Polar residues" evidence="3">
    <location>
        <begin position="304"/>
        <end position="320"/>
    </location>
</feature>
<feature type="active site" description="Proton acceptor" evidence="1 2">
    <location>
        <position position="129"/>
    </location>
</feature>
<feature type="binding site" evidence="1">
    <location>
        <begin position="10"/>
        <end position="18"/>
    </location>
    <ligand>
        <name>ATP</name>
        <dbReference type="ChEBI" id="CHEBI:30616"/>
    </ligand>
</feature>
<feature type="binding site" evidence="1">
    <location>
        <position position="33"/>
    </location>
    <ligand>
        <name>ATP</name>
        <dbReference type="ChEBI" id="CHEBI:30616"/>
    </ligand>
</feature>
<reference key="1">
    <citation type="journal article" date="2000" name="Nature">
        <title>Sequence and analysis of chromosome 3 of the plant Arabidopsis thaliana.</title>
        <authorList>
            <person name="Salanoubat M."/>
            <person name="Lemcke K."/>
            <person name="Rieger M."/>
            <person name="Ansorge W."/>
            <person name="Unseld M."/>
            <person name="Fartmann B."/>
            <person name="Valle G."/>
            <person name="Bloecker H."/>
            <person name="Perez-Alonso M."/>
            <person name="Obermaier B."/>
            <person name="Delseny M."/>
            <person name="Boutry M."/>
            <person name="Grivell L.A."/>
            <person name="Mache R."/>
            <person name="Puigdomenech P."/>
            <person name="De Simone V."/>
            <person name="Choisne N."/>
            <person name="Artiguenave F."/>
            <person name="Robert C."/>
            <person name="Brottier P."/>
            <person name="Wincker P."/>
            <person name="Cattolico L."/>
            <person name="Weissenbach J."/>
            <person name="Saurin W."/>
            <person name="Quetier F."/>
            <person name="Schaefer M."/>
            <person name="Mueller-Auer S."/>
            <person name="Gabel C."/>
            <person name="Fuchs M."/>
            <person name="Benes V."/>
            <person name="Wurmbach E."/>
            <person name="Drzonek H."/>
            <person name="Erfle H."/>
            <person name="Jordan N."/>
            <person name="Bangert S."/>
            <person name="Wiedelmann R."/>
            <person name="Kranz H."/>
            <person name="Voss H."/>
            <person name="Holland R."/>
            <person name="Brandt P."/>
            <person name="Nyakatura G."/>
            <person name="Vezzi A."/>
            <person name="D'Angelo M."/>
            <person name="Pallavicini A."/>
            <person name="Toppo S."/>
            <person name="Simionati B."/>
            <person name="Conrad A."/>
            <person name="Hornischer K."/>
            <person name="Kauer G."/>
            <person name="Loehnert T.-H."/>
            <person name="Nordsiek G."/>
            <person name="Reichelt J."/>
            <person name="Scharfe M."/>
            <person name="Schoen O."/>
            <person name="Bargues M."/>
            <person name="Terol J."/>
            <person name="Climent J."/>
            <person name="Navarro P."/>
            <person name="Collado C."/>
            <person name="Perez-Perez A."/>
            <person name="Ottenwaelder B."/>
            <person name="Duchemin D."/>
            <person name="Cooke R."/>
            <person name="Laudie M."/>
            <person name="Berger-Llauro C."/>
            <person name="Purnelle B."/>
            <person name="Masuy D."/>
            <person name="de Haan M."/>
            <person name="Maarse A.C."/>
            <person name="Alcaraz J.-P."/>
            <person name="Cottet A."/>
            <person name="Casacuberta E."/>
            <person name="Monfort A."/>
            <person name="Argiriou A."/>
            <person name="Flores M."/>
            <person name="Liguori R."/>
            <person name="Vitale D."/>
            <person name="Mannhaupt G."/>
            <person name="Haase D."/>
            <person name="Schoof H."/>
            <person name="Rudd S."/>
            <person name="Zaccaria P."/>
            <person name="Mewes H.-W."/>
            <person name="Mayer K.F.X."/>
            <person name="Kaul S."/>
            <person name="Town C.D."/>
            <person name="Koo H.L."/>
            <person name="Tallon L.J."/>
            <person name="Jenkins J."/>
            <person name="Rooney T."/>
            <person name="Rizzo M."/>
            <person name="Walts A."/>
            <person name="Utterback T."/>
            <person name="Fujii C.Y."/>
            <person name="Shea T.P."/>
            <person name="Creasy T.H."/>
            <person name="Haas B."/>
            <person name="Maiti R."/>
            <person name="Wu D."/>
            <person name="Peterson J."/>
            <person name="Van Aken S."/>
            <person name="Pai G."/>
            <person name="Militscher J."/>
            <person name="Sellers P."/>
            <person name="Gill J.E."/>
            <person name="Feldblyum T.V."/>
            <person name="Preuss D."/>
            <person name="Lin X."/>
            <person name="Nierman W.C."/>
            <person name="Salzberg S.L."/>
            <person name="White O."/>
            <person name="Venter J.C."/>
            <person name="Fraser C.M."/>
            <person name="Kaneko T."/>
            <person name="Nakamura Y."/>
            <person name="Sato S."/>
            <person name="Kato T."/>
            <person name="Asamizu E."/>
            <person name="Sasamoto S."/>
            <person name="Kimura T."/>
            <person name="Idesawa K."/>
            <person name="Kawashima K."/>
            <person name="Kishida Y."/>
            <person name="Kiyokawa C."/>
            <person name="Kohara M."/>
            <person name="Matsumoto M."/>
            <person name="Matsuno A."/>
            <person name="Muraki A."/>
            <person name="Nakayama S."/>
            <person name="Nakazaki N."/>
            <person name="Shinpo S."/>
            <person name="Takeuchi C."/>
            <person name="Wada T."/>
            <person name="Watanabe A."/>
            <person name="Yamada M."/>
            <person name="Yasuda M."/>
            <person name="Tabata S."/>
        </authorList>
    </citation>
    <scope>NUCLEOTIDE SEQUENCE [LARGE SCALE GENOMIC DNA]</scope>
    <source>
        <strain>cv. Columbia</strain>
    </source>
</reference>
<reference key="2">
    <citation type="journal article" date="2017" name="Plant J.">
        <title>Araport11: a complete reannotation of the Arabidopsis thaliana reference genome.</title>
        <authorList>
            <person name="Cheng C.Y."/>
            <person name="Krishnakumar V."/>
            <person name="Chan A.P."/>
            <person name="Thibaud-Nissen F."/>
            <person name="Schobel S."/>
            <person name="Town C.D."/>
        </authorList>
    </citation>
    <scope>GENOME REANNOTATION</scope>
    <source>
        <strain>cv. Columbia</strain>
    </source>
</reference>
<reference key="3">
    <citation type="journal article" date="2003" name="Science">
        <title>Empirical analysis of transcriptional activity in the Arabidopsis genome.</title>
        <authorList>
            <person name="Yamada K."/>
            <person name="Lim J."/>
            <person name="Dale J.M."/>
            <person name="Chen H."/>
            <person name="Shinn P."/>
            <person name="Palm C.J."/>
            <person name="Southwick A.M."/>
            <person name="Wu H.C."/>
            <person name="Kim C.J."/>
            <person name="Nguyen M."/>
            <person name="Pham P.K."/>
            <person name="Cheuk R.F."/>
            <person name="Karlin-Newmann G."/>
            <person name="Liu S.X."/>
            <person name="Lam B."/>
            <person name="Sakano H."/>
            <person name="Wu T."/>
            <person name="Yu G."/>
            <person name="Miranda M."/>
            <person name="Quach H.L."/>
            <person name="Tripp M."/>
            <person name="Chang C.H."/>
            <person name="Lee J.M."/>
            <person name="Toriumi M.J."/>
            <person name="Chan M.M."/>
            <person name="Tang C.C."/>
            <person name="Onodera C.S."/>
            <person name="Deng J.M."/>
            <person name="Akiyama K."/>
            <person name="Ansari Y."/>
            <person name="Arakawa T."/>
            <person name="Banh J."/>
            <person name="Banno F."/>
            <person name="Bowser L."/>
            <person name="Brooks S.Y."/>
            <person name="Carninci P."/>
            <person name="Chao Q."/>
            <person name="Choy N."/>
            <person name="Enju A."/>
            <person name="Goldsmith A.D."/>
            <person name="Gurjal M."/>
            <person name="Hansen N.F."/>
            <person name="Hayashizaki Y."/>
            <person name="Johnson-Hopson C."/>
            <person name="Hsuan V.W."/>
            <person name="Iida K."/>
            <person name="Karnes M."/>
            <person name="Khan S."/>
            <person name="Koesema E."/>
            <person name="Ishida J."/>
            <person name="Jiang P.X."/>
            <person name="Jones T."/>
            <person name="Kawai J."/>
            <person name="Kamiya A."/>
            <person name="Meyers C."/>
            <person name="Nakajima M."/>
            <person name="Narusaka M."/>
            <person name="Seki M."/>
            <person name="Sakurai T."/>
            <person name="Satou M."/>
            <person name="Tamse R."/>
            <person name="Vaysberg M."/>
            <person name="Wallender E.K."/>
            <person name="Wong C."/>
            <person name="Yamamura Y."/>
            <person name="Yuan S."/>
            <person name="Shinozaki K."/>
            <person name="Davis R.W."/>
            <person name="Theologis A."/>
            <person name="Ecker J.R."/>
        </authorList>
    </citation>
    <scope>NUCLEOTIDE SEQUENCE [LARGE SCALE MRNA]</scope>
    <source>
        <strain>cv. Columbia</strain>
    </source>
</reference>
<reference key="4">
    <citation type="journal article" date="2007" name="Plant J.">
        <title>Members of the plant NIMA-related kinases are involved in organ development and vascularization in poplar, Arabidopsis and rice.</title>
        <authorList>
            <person name="Vigneault F."/>
            <person name="Lachance D."/>
            <person name="Cloutier M."/>
            <person name="Pelletier G."/>
            <person name="Levasseur C."/>
            <person name="Seguin A."/>
        </authorList>
    </citation>
    <scope>GENE FAMILY</scope>
    <scope>NOMENCLATURE</scope>
</reference>
<evidence type="ECO:0000255" key="1">
    <source>
        <dbReference type="PROSITE-ProRule" id="PRU00159"/>
    </source>
</evidence>
<evidence type="ECO:0000255" key="2">
    <source>
        <dbReference type="PROSITE-ProRule" id="PRU10027"/>
    </source>
</evidence>
<evidence type="ECO:0000256" key="3">
    <source>
        <dbReference type="SAM" id="MobiDB-lite"/>
    </source>
</evidence>
<evidence type="ECO:0000305" key="4"/>
<accession>Q8RXT4</accession>
<accession>Q9M1W2</accession>
<gene>
    <name type="primary">NEK4</name>
    <name type="ordered locus">At3g63280</name>
    <name type="ORF">F16M2.130</name>
</gene>
<keyword id="KW-0067">ATP-binding</keyword>
<keyword id="KW-0418">Kinase</keyword>
<keyword id="KW-0547">Nucleotide-binding</keyword>
<keyword id="KW-1185">Reference proteome</keyword>
<keyword id="KW-0723">Serine/threonine-protein kinase</keyword>
<keyword id="KW-0808">Transferase</keyword>
<organism>
    <name type="scientific">Arabidopsis thaliana</name>
    <name type="common">Mouse-ear cress</name>
    <dbReference type="NCBI Taxonomy" id="3702"/>
    <lineage>
        <taxon>Eukaryota</taxon>
        <taxon>Viridiplantae</taxon>
        <taxon>Streptophyta</taxon>
        <taxon>Embryophyta</taxon>
        <taxon>Tracheophyta</taxon>
        <taxon>Spermatophyta</taxon>
        <taxon>Magnoliopsida</taxon>
        <taxon>eudicotyledons</taxon>
        <taxon>Gunneridae</taxon>
        <taxon>Pentapetalae</taxon>
        <taxon>rosids</taxon>
        <taxon>malvids</taxon>
        <taxon>Brassicales</taxon>
        <taxon>Brassicaceae</taxon>
        <taxon>Camelineae</taxon>
        <taxon>Arabidopsis</taxon>
    </lineage>
</organism>
<dbReference type="EC" id="2.7.11.1"/>
<dbReference type="EMBL" id="AL138648">
    <property type="protein sequence ID" value="CAB86429.1"/>
    <property type="status" value="ALT_SEQ"/>
    <property type="molecule type" value="Genomic_DNA"/>
</dbReference>
<dbReference type="EMBL" id="CP002686">
    <property type="protein sequence ID" value="AEE80460.1"/>
    <property type="molecule type" value="Genomic_DNA"/>
</dbReference>
<dbReference type="EMBL" id="CP002686">
    <property type="protein sequence ID" value="AEE80461.1"/>
    <property type="molecule type" value="Genomic_DNA"/>
</dbReference>
<dbReference type="EMBL" id="CP002686">
    <property type="protein sequence ID" value="ANM64569.1"/>
    <property type="molecule type" value="Genomic_DNA"/>
</dbReference>
<dbReference type="EMBL" id="AY080682">
    <property type="protein sequence ID" value="AAL86305.1"/>
    <property type="molecule type" value="mRNA"/>
</dbReference>
<dbReference type="EMBL" id="AY117234">
    <property type="protein sequence ID" value="AAM51309.1"/>
    <property type="molecule type" value="mRNA"/>
</dbReference>
<dbReference type="PIR" id="T48117">
    <property type="entry name" value="T48117"/>
</dbReference>
<dbReference type="RefSeq" id="NP_001118899.1">
    <property type="nucleotide sequence ID" value="NM_001125427.1"/>
</dbReference>
<dbReference type="RefSeq" id="NP_001326587.1">
    <property type="nucleotide sequence ID" value="NM_001340197.1"/>
</dbReference>
<dbReference type="RefSeq" id="NP_191887.2">
    <property type="nucleotide sequence ID" value="NM_116193.5"/>
</dbReference>
<dbReference type="SMR" id="Q8RXT4"/>
<dbReference type="BioGRID" id="10817">
    <property type="interactions" value="4"/>
</dbReference>
<dbReference type="FunCoup" id="Q8RXT4">
    <property type="interactions" value="1257"/>
</dbReference>
<dbReference type="STRING" id="3702.Q8RXT4"/>
<dbReference type="iPTMnet" id="Q8RXT4"/>
<dbReference type="PaxDb" id="3702-AT3G63280.1"/>
<dbReference type="ProteomicsDB" id="238697"/>
<dbReference type="EnsemblPlants" id="AT3G63280.1">
    <property type="protein sequence ID" value="AT3G63280.1"/>
    <property type="gene ID" value="AT3G63280"/>
</dbReference>
<dbReference type="EnsemblPlants" id="AT3G63280.2">
    <property type="protein sequence ID" value="AT3G63280.2"/>
    <property type="gene ID" value="AT3G63280"/>
</dbReference>
<dbReference type="EnsemblPlants" id="AT3G63280.3">
    <property type="protein sequence ID" value="AT3G63280.3"/>
    <property type="gene ID" value="AT3G63280"/>
</dbReference>
<dbReference type="GeneID" id="825503"/>
<dbReference type="Gramene" id="AT3G63280.1">
    <property type="protein sequence ID" value="AT3G63280.1"/>
    <property type="gene ID" value="AT3G63280"/>
</dbReference>
<dbReference type="Gramene" id="AT3G63280.2">
    <property type="protein sequence ID" value="AT3G63280.2"/>
    <property type="gene ID" value="AT3G63280"/>
</dbReference>
<dbReference type="Gramene" id="AT3G63280.3">
    <property type="protein sequence ID" value="AT3G63280.3"/>
    <property type="gene ID" value="AT3G63280"/>
</dbReference>
<dbReference type="KEGG" id="ath:AT3G63280"/>
<dbReference type="Araport" id="AT3G63280"/>
<dbReference type="TAIR" id="AT3G63280">
    <property type="gene designation" value="NEK4"/>
</dbReference>
<dbReference type="eggNOG" id="KOG0589">
    <property type="taxonomic scope" value="Eukaryota"/>
</dbReference>
<dbReference type="HOGENOM" id="CLU_000288_128_3_1"/>
<dbReference type="InParanoid" id="Q8RXT4"/>
<dbReference type="PhylomeDB" id="Q8RXT4"/>
<dbReference type="PRO" id="PR:Q8RXT4"/>
<dbReference type="Proteomes" id="UP000006548">
    <property type="component" value="Chromosome 3"/>
</dbReference>
<dbReference type="ExpressionAtlas" id="Q8RXT4">
    <property type="expression patterns" value="baseline and differential"/>
</dbReference>
<dbReference type="GO" id="GO:0005524">
    <property type="term" value="F:ATP binding"/>
    <property type="evidence" value="ECO:0007669"/>
    <property type="project" value="UniProtKB-KW"/>
</dbReference>
<dbReference type="GO" id="GO:0106310">
    <property type="term" value="F:protein serine kinase activity"/>
    <property type="evidence" value="ECO:0007669"/>
    <property type="project" value="RHEA"/>
</dbReference>
<dbReference type="GO" id="GO:0004674">
    <property type="term" value="F:protein serine/threonine kinase activity"/>
    <property type="evidence" value="ECO:0007669"/>
    <property type="project" value="UniProtKB-KW"/>
</dbReference>
<dbReference type="CDD" id="cd08215">
    <property type="entry name" value="STKc_Nek"/>
    <property type="match status" value="1"/>
</dbReference>
<dbReference type="FunFam" id="3.30.200.20:FF:000108">
    <property type="entry name" value="Serine/threonine-protein kinase Nek2"/>
    <property type="match status" value="1"/>
</dbReference>
<dbReference type="FunFam" id="1.10.510.10:FF:000788">
    <property type="entry name" value="Serine/threonine-protein kinase Nek3"/>
    <property type="match status" value="1"/>
</dbReference>
<dbReference type="Gene3D" id="3.30.200.20">
    <property type="entry name" value="Phosphorylase Kinase, domain 1"/>
    <property type="match status" value="1"/>
</dbReference>
<dbReference type="Gene3D" id="1.10.510.10">
    <property type="entry name" value="Transferase(Phosphotransferase) domain 1"/>
    <property type="match status" value="1"/>
</dbReference>
<dbReference type="InterPro" id="IPR011009">
    <property type="entry name" value="Kinase-like_dom_sf"/>
</dbReference>
<dbReference type="InterPro" id="IPR050660">
    <property type="entry name" value="NEK_Ser/Thr_kinase"/>
</dbReference>
<dbReference type="InterPro" id="IPR000719">
    <property type="entry name" value="Prot_kinase_dom"/>
</dbReference>
<dbReference type="InterPro" id="IPR017441">
    <property type="entry name" value="Protein_kinase_ATP_BS"/>
</dbReference>
<dbReference type="InterPro" id="IPR008271">
    <property type="entry name" value="Ser/Thr_kinase_AS"/>
</dbReference>
<dbReference type="PANTHER" id="PTHR43671">
    <property type="entry name" value="SERINE/THREONINE-PROTEIN KINASE NEK"/>
    <property type="match status" value="1"/>
</dbReference>
<dbReference type="PANTHER" id="PTHR43671:SF93">
    <property type="entry name" value="SERINE_THREONINE-PROTEIN KINASE NEK4"/>
    <property type="match status" value="1"/>
</dbReference>
<dbReference type="Pfam" id="PF00069">
    <property type="entry name" value="Pkinase"/>
    <property type="match status" value="1"/>
</dbReference>
<dbReference type="SMART" id="SM00220">
    <property type="entry name" value="S_TKc"/>
    <property type="match status" value="1"/>
</dbReference>
<dbReference type="SUPFAM" id="SSF56112">
    <property type="entry name" value="Protein kinase-like (PK-like)"/>
    <property type="match status" value="1"/>
</dbReference>
<dbReference type="PROSITE" id="PS00107">
    <property type="entry name" value="PROTEIN_KINASE_ATP"/>
    <property type="match status" value="1"/>
</dbReference>
<dbReference type="PROSITE" id="PS50011">
    <property type="entry name" value="PROTEIN_KINASE_DOM"/>
    <property type="match status" value="1"/>
</dbReference>
<dbReference type="PROSITE" id="PS00108">
    <property type="entry name" value="PROTEIN_KINASE_ST"/>
    <property type="match status" value="1"/>
</dbReference>
<sequence length="555" mass="62898">MERYEVLEQIGKGSFGSALLVRHKQERKKYVLKKIRLARQSDRARRSAHQEMELISTVRNPFVVEYKDSWVEKGCYVCIVIGYCQGGDMTDTIKRACGVHFPEEKLCQWLVQLLMALDYLHSNHILHRDVKCSNIFLTKEQDIRLGDFGLAKILTSDDLTSSVVGTPSYMCPELLADIPYGSKSDIWSLGCCMYEMAAHKPPFKASDVQTLITKIHKLIMDPIPAMYSGSFRGLIKSMLRKNPELRPSANELLNHPHLQPYISMVYMKLESPRRSTFPLQFSERDATLKERRRSSFSNDRRLNPSVSDTEAGSVSSSGKASPTPMFNGRKVSEVTVGVVREEIVPQRQEEAKKQSGAARTPRVAGTSAKASTQRTVFKHELMKVSNPTERRRRVSLPLVVENPYTYESDITALCSLNSPDVSVNTPRFDKIAEFPEDIFQNQNRETASRREVARHSFSSPPCPPHGEDNSNGSITKDKCTVQKRSVSEVKQRRFDTSSYQQRAEALEGLLEFSAKLLQQERYDELGVLLKPFGAERVSSRETAIWLTKSFKEASV</sequence>
<proteinExistence type="evidence at transcript level"/>